<sequence>MTANPTSIHQRLDRRLSGFSLEQPFYTSPEVYALDLQHIFYKQWLYAVPVCQLAKAGSYTTLRVGAYEVVIVRSRDGEVRAFHNSCRHRGSLICKARQGQVAKLVCPYHQWTYELDGKLIWANDMGPDFDASKYGLKPVNLRNLDGLIYICLSDTPPDFQTFAQLARPYLEVHDLKDAKVAFTSTIIEKGNWKLVWENNRECYHCSSNHPALCRSFPLDPEVAGVQADGGVSKKLQAHFDRCEAAGTPAQFVLAGDGQYRLARMPLQEKALSYTMDGKAAVSRHLGRVAPPDAGTLLMFHYPSTWNHFLPDHSLTFRVMPISPTETEVTTTWLVHKDAVEGVDYDLKRLTEVWIATNDEDREIVETNQQGILSPAYVPGPYSPGQESGVMQFVDWYAASLERALAPRQVAAE</sequence>
<gene>
    <name evidence="6" type="primary">stc2</name>
    <name evidence="8" type="ordered locus">RA0400</name>
    <name evidence="11" type="ORF">SMa0751</name>
</gene>
<accession>Q92ZP9</accession>
<feature type="chain" id="PRO_0000462001" description="Stachydrine N-demethylase">
    <location>
        <begin position="1"/>
        <end position="412"/>
    </location>
</feature>
<feature type="domain" description="Rieske" evidence="1">
    <location>
        <begin position="45"/>
        <end position="150"/>
    </location>
</feature>
<feature type="binding site" evidence="3 4 5 12 13 14 15 16 17">
    <location>
        <position position="86"/>
    </location>
    <ligand>
        <name>[2Fe-2S] cluster</name>
        <dbReference type="ChEBI" id="CHEBI:190135"/>
    </ligand>
</feature>
<feature type="binding site" evidence="3 4 5 12 13 14 15 16 17">
    <location>
        <position position="88"/>
    </location>
    <ligand>
        <name>[2Fe-2S] cluster</name>
        <dbReference type="ChEBI" id="CHEBI:190135"/>
    </ligand>
</feature>
<feature type="binding site" evidence="3 4 5 12 13 14 15 16 17">
    <location>
        <position position="106"/>
    </location>
    <ligand>
        <name>[2Fe-2S] cluster</name>
        <dbReference type="ChEBI" id="CHEBI:190135"/>
    </ligand>
</feature>
<feature type="binding site" evidence="3 4 5 12 13 14 15 16 17">
    <location>
        <position position="109"/>
    </location>
    <ligand>
        <name>[2Fe-2S] cluster</name>
        <dbReference type="ChEBI" id="CHEBI:190135"/>
    </ligand>
</feature>
<feature type="binding site" evidence="3 4 5 12 13 14 15 16">
    <location>
        <position position="204"/>
    </location>
    <ligand>
        <name>Fe cation</name>
        <dbReference type="ChEBI" id="CHEBI:24875"/>
    </ligand>
</feature>
<feature type="binding site" evidence="3 4 5 12 13 14 15 16 17">
    <location>
        <position position="209"/>
    </location>
    <ligand>
        <name>Fe cation</name>
        <dbReference type="ChEBI" id="CHEBI:24875"/>
    </ligand>
</feature>
<feature type="binding site" evidence="3 4 5 12 13 14 15 16 17">
    <location>
        <position position="360"/>
    </location>
    <ligand>
        <name>Fe cation</name>
        <dbReference type="ChEBI" id="CHEBI:24875"/>
    </ligand>
</feature>
<organism>
    <name type="scientific">Rhizobium meliloti (strain 1021)</name>
    <name type="common">Ensifer meliloti</name>
    <name type="synonym">Sinorhizobium meliloti</name>
    <dbReference type="NCBI Taxonomy" id="266834"/>
    <lineage>
        <taxon>Bacteria</taxon>
        <taxon>Pseudomonadati</taxon>
        <taxon>Pseudomonadota</taxon>
        <taxon>Alphaproteobacteria</taxon>
        <taxon>Hyphomicrobiales</taxon>
        <taxon>Rhizobiaceae</taxon>
        <taxon>Sinorhizobium/Ensifer group</taxon>
        <taxon>Sinorhizobium</taxon>
    </lineage>
</organism>
<proteinExistence type="evidence at protein level"/>
<name>STC2_RHIME</name>
<comment type="function">
    <text evidence="2 3">Monooxygenase involved in the catabolism of stachydrine (L-proline betaine), a source of carbon and nitrogen (PubMed:10689197, PubMed:22224443). Part of a Rieske-type oxygenase system that catalyzes the demethylation of stachydrine to produce N-methyl-L-proline (monomethylproline) (PubMed:22224443). Stc2 is the catalytic subunit (PubMed:22224443).</text>
</comment>
<comment type="catalytic activity">
    <reaction evidence="3">
        <text>L-proline betaine + NADH + O2 + H(+) = N-methyl-L-proline + formaldehyde + NAD(+) + H2O</text>
        <dbReference type="Rhea" id="RHEA:61616"/>
        <dbReference type="ChEBI" id="CHEBI:15377"/>
        <dbReference type="ChEBI" id="CHEBI:15378"/>
        <dbReference type="ChEBI" id="CHEBI:15379"/>
        <dbReference type="ChEBI" id="CHEBI:16842"/>
        <dbReference type="ChEBI" id="CHEBI:35280"/>
        <dbReference type="ChEBI" id="CHEBI:57540"/>
        <dbReference type="ChEBI" id="CHEBI:57945"/>
        <dbReference type="ChEBI" id="CHEBI:133743"/>
        <dbReference type="EC" id="1.14.13.247"/>
    </reaction>
</comment>
<comment type="catalytic activity">
    <reaction evidence="3">
        <text>L-proline betaine + NADPH + O2 + H(+) = N-methyl-L-proline + formaldehyde + NADP(+) + H2O</text>
        <dbReference type="Rhea" id="RHEA:19357"/>
        <dbReference type="ChEBI" id="CHEBI:15377"/>
        <dbReference type="ChEBI" id="CHEBI:15378"/>
        <dbReference type="ChEBI" id="CHEBI:15379"/>
        <dbReference type="ChEBI" id="CHEBI:16842"/>
        <dbReference type="ChEBI" id="CHEBI:35280"/>
        <dbReference type="ChEBI" id="CHEBI:57783"/>
        <dbReference type="ChEBI" id="CHEBI:58349"/>
        <dbReference type="ChEBI" id="CHEBI:133743"/>
        <dbReference type="EC" id="1.14.13.247"/>
    </reaction>
</comment>
<comment type="cofactor">
    <cofactor evidence="3 4 5">
        <name>[2Fe-2S] cluster</name>
        <dbReference type="ChEBI" id="CHEBI:190135"/>
    </cofactor>
    <text evidence="3 4 5">Binds 1 [2Fe-2S] cluster per subunit.</text>
</comment>
<comment type="cofactor">
    <cofactor evidence="3 4 5">
        <name>Fe cation</name>
        <dbReference type="ChEBI" id="CHEBI:24875"/>
    </cofactor>
    <text evidence="3 4 5">Binds 1 Fe cation per subunit.</text>
</comment>
<comment type="subunit">
    <text evidence="3 9 10">Homotrimer (PubMed:22224443). The system is probably composed of an oxygenase subunit (Stc2) and two reductase subunits (Stc3 and Stc4) (Probable).</text>
</comment>
<comment type="disruption phenotype">
    <text evidence="2">In strain Sm2011, the insertion mutant cannot grow on stachydrine but it can grow on N-methyl proline.</text>
</comment>
<comment type="similarity">
    <text evidence="8">Belongs to the bacterial ring-hydroxylating dioxygenase alpha subunit family.</text>
</comment>
<keyword id="KW-0001">2Fe-2S</keyword>
<keyword id="KW-0002">3D-structure</keyword>
<keyword id="KW-0408">Iron</keyword>
<keyword id="KW-0411">Iron-sulfur</keyword>
<keyword id="KW-0479">Metal-binding</keyword>
<keyword id="KW-0503">Monooxygenase</keyword>
<keyword id="KW-0520">NAD</keyword>
<keyword id="KW-0521">NADP</keyword>
<keyword id="KW-0560">Oxidoreductase</keyword>
<keyword id="KW-0614">Plasmid</keyword>
<keyword id="KW-1185">Reference proteome</keyword>
<geneLocation type="plasmid">
    <name>pSymA</name>
    <name>megaplasmid 1</name>
</geneLocation>
<protein>
    <recommendedName>
        <fullName evidence="8">Stachydrine N-demethylase</fullName>
        <ecNumber evidence="3">1.14.13.247</ecNumber>
    </recommendedName>
    <alternativeName>
        <fullName evidence="7">Rieske-type mononuclear non-heme enzyme</fullName>
    </alternativeName>
</protein>
<dbReference type="EC" id="1.14.13.247" evidence="3"/>
<dbReference type="EMBL" id="AE006469">
    <property type="protein sequence ID" value="AAK65058.1"/>
    <property type="molecule type" value="Genomic_DNA"/>
</dbReference>
<dbReference type="PIR" id="H95311">
    <property type="entry name" value="H95311"/>
</dbReference>
<dbReference type="RefSeq" id="NP_435646.1">
    <property type="nucleotide sequence ID" value="NC_003037.1"/>
</dbReference>
<dbReference type="RefSeq" id="WP_010967390.1">
    <property type="nucleotide sequence ID" value="NC_003037.1"/>
</dbReference>
<dbReference type="PDB" id="3VCA">
    <property type="method" value="X-ray"/>
    <property type="resolution" value="1.59 A"/>
    <property type="chains" value="A=1-412"/>
</dbReference>
<dbReference type="PDB" id="3VCP">
    <property type="method" value="X-ray"/>
    <property type="resolution" value="2.20 A"/>
    <property type="chains" value="A=1-412"/>
</dbReference>
<dbReference type="PDB" id="4QUP">
    <property type="method" value="X-ray"/>
    <property type="resolution" value="1.70 A"/>
    <property type="chains" value="A=1-412"/>
</dbReference>
<dbReference type="PDB" id="4QUQ">
    <property type="method" value="X-ray"/>
    <property type="resolution" value="2.27 A"/>
    <property type="chains" value="A=1-412"/>
</dbReference>
<dbReference type="PDB" id="4QUR">
    <property type="method" value="X-ray"/>
    <property type="resolution" value="1.76 A"/>
    <property type="chains" value="A=1-412"/>
</dbReference>
<dbReference type="PDB" id="5HL4">
    <property type="method" value="X-ray"/>
    <property type="resolution" value="2.20 A"/>
    <property type="chains" value="A=1-412"/>
</dbReference>
<dbReference type="PDBsum" id="3VCA"/>
<dbReference type="PDBsum" id="3VCP"/>
<dbReference type="PDBsum" id="4QUP"/>
<dbReference type="PDBsum" id="4QUQ"/>
<dbReference type="PDBsum" id="4QUR"/>
<dbReference type="PDBsum" id="5HL4"/>
<dbReference type="SMR" id="Q92ZP9"/>
<dbReference type="EnsemblBacteria" id="AAK65058">
    <property type="protein sequence ID" value="AAK65058"/>
    <property type="gene ID" value="SMa0751"/>
</dbReference>
<dbReference type="KEGG" id="sme:SMa0751"/>
<dbReference type="PATRIC" id="fig|266834.11.peg.417"/>
<dbReference type="HOGENOM" id="CLU_026244_3_0_5"/>
<dbReference type="OrthoDB" id="7456916at2"/>
<dbReference type="BioCyc" id="MetaCyc:MONOMER-2222"/>
<dbReference type="EvolutionaryTrace" id="Q92ZP9"/>
<dbReference type="Proteomes" id="UP000001976">
    <property type="component" value="Plasmid pSymA"/>
</dbReference>
<dbReference type="GO" id="GO:0051537">
    <property type="term" value="F:2 iron, 2 sulfur cluster binding"/>
    <property type="evidence" value="ECO:0007669"/>
    <property type="project" value="UniProtKB-KW"/>
</dbReference>
<dbReference type="GO" id="GO:0051213">
    <property type="term" value="F:dioxygenase activity"/>
    <property type="evidence" value="ECO:0007669"/>
    <property type="project" value="UniProtKB-KW"/>
</dbReference>
<dbReference type="GO" id="GO:0005506">
    <property type="term" value="F:iron ion binding"/>
    <property type="evidence" value="ECO:0007669"/>
    <property type="project" value="InterPro"/>
</dbReference>
<dbReference type="CDD" id="cd08884">
    <property type="entry name" value="RHO_alpha_C_GbcA-like"/>
    <property type="match status" value="1"/>
</dbReference>
<dbReference type="CDD" id="cd03469">
    <property type="entry name" value="Rieske_RO_Alpha_N"/>
    <property type="match status" value="1"/>
</dbReference>
<dbReference type="Gene3D" id="3.90.380.10">
    <property type="entry name" value="Naphthalene 1,2-dioxygenase Alpha Subunit, Chain A, domain 1"/>
    <property type="match status" value="1"/>
</dbReference>
<dbReference type="Gene3D" id="2.102.10.10">
    <property type="entry name" value="Rieske [2Fe-2S] iron-sulphur domain"/>
    <property type="match status" value="1"/>
</dbReference>
<dbReference type="InterPro" id="IPR017941">
    <property type="entry name" value="Rieske_2Fe-2S"/>
</dbReference>
<dbReference type="InterPro" id="IPR036922">
    <property type="entry name" value="Rieske_2Fe-2S_sf"/>
</dbReference>
<dbReference type="InterPro" id="IPR015881">
    <property type="entry name" value="Ring-hydroxy_dOase_2Fe2S_BS"/>
</dbReference>
<dbReference type="InterPro" id="IPR015879">
    <property type="entry name" value="Ring_hydroxy_dOase_asu_C_dom"/>
</dbReference>
<dbReference type="InterPro" id="IPR001663">
    <property type="entry name" value="Rng_hydr_dOase-A"/>
</dbReference>
<dbReference type="PANTHER" id="PTHR43756">
    <property type="entry name" value="CHOLINE MONOOXYGENASE, CHLOROPLASTIC"/>
    <property type="match status" value="1"/>
</dbReference>
<dbReference type="PANTHER" id="PTHR43756:SF5">
    <property type="entry name" value="CHOLINE MONOOXYGENASE, CHLOROPLASTIC"/>
    <property type="match status" value="1"/>
</dbReference>
<dbReference type="Pfam" id="PF00355">
    <property type="entry name" value="Rieske"/>
    <property type="match status" value="1"/>
</dbReference>
<dbReference type="Pfam" id="PF00848">
    <property type="entry name" value="Ring_hydroxyl_A"/>
    <property type="match status" value="1"/>
</dbReference>
<dbReference type="PRINTS" id="PR00090">
    <property type="entry name" value="RNGDIOXGNASE"/>
</dbReference>
<dbReference type="SUPFAM" id="SSF55961">
    <property type="entry name" value="Bet v1-like"/>
    <property type="match status" value="1"/>
</dbReference>
<dbReference type="SUPFAM" id="SSF50022">
    <property type="entry name" value="ISP domain"/>
    <property type="match status" value="1"/>
</dbReference>
<dbReference type="PROSITE" id="PS51296">
    <property type="entry name" value="RIESKE"/>
    <property type="match status" value="1"/>
</dbReference>
<dbReference type="PROSITE" id="PS00570">
    <property type="entry name" value="RING_HYDROXYL_ALPHA"/>
    <property type="match status" value="1"/>
</dbReference>
<evidence type="ECO:0000255" key="1">
    <source>
        <dbReference type="PROSITE-ProRule" id="PRU00628"/>
    </source>
</evidence>
<evidence type="ECO:0000269" key="2">
    <source>
    </source>
</evidence>
<evidence type="ECO:0000269" key="3">
    <source>
    </source>
</evidence>
<evidence type="ECO:0000269" key="4">
    <source>
    </source>
</evidence>
<evidence type="ECO:0000269" key="5">
    <source ref="5"/>
</evidence>
<evidence type="ECO:0000303" key="6">
    <source>
    </source>
</evidence>
<evidence type="ECO:0000303" key="7">
    <source>
    </source>
</evidence>
<evidence type="ECO:0000305" key="8"/>
<evidence type="ECO:0000305" key="9">
    <source>
    </source>
</evidence>
<evidence type="ECO:0000305" key="10">
    <source>
    </source>
</evidence>
<evidence type="ECO:0000312" key="11">
    <source>
        <dbReference type="EMBL" id="AAK65058.1"/>
    </source>
</evidence>
<evidence type="ECO:0007744" key="12">
    <source>
        <dbReference type="PDB" id="3VCA"/>
    </source>
</evidence>
<evidence type="ECO:0007744" key="13">
    <source>
        <dbReference type="PDB" id="3VCP"/>
    </source>
</evidence>
<evidence type="ECO:0007744" key="14">
    <source>
        <dbReference type="PDB" id="4QUP"/>
    </source>
</evidence>
<evidence type="ECO:0007744" key="15">
    <source>
        <dbReference type="PDB" id="4QUQ"/>
    </source>
</evidence>
<evidence type="ECO:0007744" key="16">
    <source>
        <dbReference type="PDB" id="4QUR"/>
    </source>
</evidence>
<evidence type="ECO:0007744" key="17">
    <source>
        <dbReference type="PDB" id="5HL4"/>
    </source>
</evidence>
<reference evidence="11" key="1">
    <citation type="journal article" date="2001" name="Proc. Natl. Acad. Sci. U.S.A.">
        <title>Nucleotide sequence and predicted functions of the entire Sinorhizobium meliloti pSymA megaplasmid.</title>
        <authorList>
            <person name="Barnett M.J."/>
            <person name="Fisher R.F."/>
            <person name="Jones T."/>
            <person name="Komp C."/>
            <person name="Abola A.P."/>
            <person name="Barloy-Hubler F."/>
            <person name="Bowser L."/>
            <person name="Capela D."/>
            <person name="Galibert F."/>
            <person name="Gouzy J."/>
            <person name="Gurjal M."/>
            <person name="Hong A."/>
            <person name="Huizar L."/>
            <person name="Hyman R.W."/>
            <person name="Kahn D."/>
            <person name="Kahn M.L."/>
            <person name="Kalman S."/>
            <person name="Keating D.H."/>
            <person name="Palm C."/>
            <person name="Peck M.C."/>
            <person name="Surzycki R."/>
            <person name="Wells D.H."/>
            <person name="Yeh K.-C."/>
            <person name="Davis R.W."/>
            <person name="Federspiel N.A."/>
            <person name="Long S.R."/>
        </authorList>
    </citation>
    <scope>NUCLEOTIDE SEQUENCE [LARGE SCALE GENOMIC DNA]</scope>
    <source>
        <strain>1021</strain>
    </source>
</reference>
<reference evidence="11" key="2">
    <citation type="journal article" date="2001" name="Science">
        <title>The composite genome of the legume symbiont Sinorhizobium meliloti.</title>
        <authorList>
            <person name="Galibert F."/>
            <person name="Finan T.M."/>
            <person name="Long S.R."/>
            <person name="Puehler A."/>
            <person name="Abola P."/>
            <person name="Ampe F."/>
            <person name="Barloy-Hubler F."/>
            <person name="Barnett M.J."/>
            <person name="Becker A."/>
            <person name="Boistard P."/>
            <person name="Bothe G."/>
            <person name="Boutry M."/>
            <person name="Bowser L."/>
            <person name="Buhrmester J."/>
            <person name="Cadieu E."/>
            <person name="Capela D."/>
            <person name="Chain P."/>
            <person name="Cowie A."/>
            <person name="Davis R.W."/>
            <person name="Dreano S."/>
            <person name="Federspiel N.A."/>
            <person name="Fisher R.F."/>
            <person name="Gloux S."/>
            <person name="Godrie T."/>
            <person name="Goffeau A."/>
            <person name="Golding B."/>
            <person name="Gouzy J."/>
            <person name="Gurjal M."/>
            <person name="Hernandez-Lucas I."/>
            <person name="Hong A."/>
            <person name="Huizar L."/>
            <person name="Hyman R.W."/>
            <person name="Jones T."/>
            <person name="Kahn D."/>
            <person name="Kahn M.L."/>
            <person name="Kalman S."/>
            <person name="Keating D.H."/>
            <person name="Kiss E."/>
            <person name="Komp C."/>
            <person name="Lelaure V."/>
            <person name="Masuy D."/>
            <person name="Palm C."/>
            <person name="Peck M.C."/>
            <person name="Pohl T.M."/>
            <person name="Portetelle D."/>
            <person name="Purnelle B."/>
            <person name="Ramsperger U."/>
            <person name="Surzycki R."/>
            <person name="Thebault P."/>
            <person name="Vandenbol M."/>
            <person name="Vorhoelter F.J."/>
            <person name="Weidner S."/>
            <person name="Wells D.H."/>
            <person name="Wong K."/>
            <person name="Yeh K.-C."/>
            <person name="Batut J."/>
        </authorList>
    </citation>
    <scope>NUCLEOTIDE SEQUENCE [LARGE SCALE GENOMIC DNA]</scope>
    <source>
        <strain>1021</strain>
    </source>
</reference>
<reference key="3">
    <citation type="journal article" date="2000" name="Gene">
        <title>The stachydrine catabolism region in Sinorhizobium meliloti encodes a multi-enzyme complex similar to the xenobiotic degrading systems in other bacteria.</title>
        <authorList>
            <person name="Burnet M.W."/>
            <person name="Goldmann A."/>
            <person name="Message B."/>
            <person name="Drong R."/>
            <person name="El Amrani A."/>
            <person name="Loreau O."/>
            <person name="Slightom J."/>
            <person name="Tepfer D."/>
        </authorList>
    </citation>
    <scope>FUNCTION</scope>
    <scope>DISRUPTION PHENOTYPE</scope>
    <source>
        <strain>Sm2011 / Rm2011 / 2011</strain>
    </source>
</reference>
<reference evidence="12 13" key="4">
    <citation type="journal article" date="2012" name="J. Am. Chem. Soc.">
        <title>Quaternary ammonium oxidative demethylation: X-ray crystallographic, resonance Raman, and UV-visible spectroscopic analysis of a Rieske-type demethylase.</title>
        <authorList>
            <person name="Daughtry K.D."/>
            <person name="Xiao Y."/>
            <person name="Stoner-Ma D."/>
            <person name="Cho E."/>
            <person name="Orville A.M."/>
            <person name="Liu P."/>
            <person name="Allen K.N."/>
        </authorList>
    </citation>
    <scope>X-RAY CRYSTALLOGRAPHY (1.59 ANGSTROMS) IN COMPLEX WITH IRON AND IRON-SULFUR (2FE-2S)</scope>
    <scope>FUNCTION</scope>
    <scope>CATALYTIC ACTIVITY</scope>
    <scope>REACTION MECHANISM</scope>
    <scope>COFACTOR</scope>
    <scope>SUBUNIT</scope>
    <source>
        <strain>1021</strain>
    </source>
</reference>
<reference evidence="14 15 16" key="5">
    <citation type="submission" date="2014-07" db="PDB data bank">
        <title>Tracking photoelectron induced in-crystallo enzyme catalysis.</title>
        <authorList>
            <person name="Agarwal R."/>
            <person name="Andi B."/>
            <person name="Gizzi A."/>
            <person name="Bonanno J.B."/>
            <person name="Almo S.C."/>
            <person name="Orville A.M."/>
        </authorList>
    </citation>
    <scope>X-RAY CRYSTALLOGRAPHY (1.70 ANGSTROMS) IN COMPLEXES WITH IRON; IRON-SULFUR (2FE-2S) AND 1-METHYL-L-PROLINE</scope>
    <scope>COFACTOR</scope>
</reference>
<reference evidence="17" key="6">
    <citation type="journal article" date="2016" name="Structure">
        <title>Acoustic Injectors for Drop-On-Demand Serial Femtosecond Crystallography.</title>
        <authorList>
            <person name="Roessler C.G."/>
            <person name="Agarwal R."/>
            <person name="Allaire M."/>
            <person name="Alonso-Mori R."/>
            <person name="Andi B."/>
            <person name="Bachega J.F."/>
            <person name="Bommer M."/>
            <person name="Brewster A.S."/>
            <person name="Browne M.C."/>
            <person name="Chatterjee R."/>
            <person name="Cho E."/>
            <person name="Cohen A.E."/>
            <person name="Cowan M."/>
            <person name="Datwani S."/>
            <person name="Davidson V.L."/>
            <person name="Defever J."/>
            <person name="Eaton B."/>
            <person name="Ellson R."/>
            <person name="Feng Y."/>
            <person name="Ghislain L.P."/>
            <person name="Glownia J.M."/>
            <person name="Han G."/>
            <person name="Hattne J."/>
            <person name="Hellmich J."/>
            <person name="Heroux A."/>
            <person name="Ibrahim M."/>
            <person name="Kern J."/>
            <person name="Kuczewski A."/>
            <person name="Lemke H.T."/>
            <person name="Liu P."/>
            <person name="Majlof L."/>
            <person name="McClintock W.M."/>
            <person name="Myers S."/>
            <person name="Nelsen S."/>
            <person name="Olechno J."/>
            <person name="Orville A.M."/>
            <person name="Sauter N.K."/>
            <person name="Soares A.S."/>
            <person name="Soltis S.M."/>
            <person name="Song H."/>
            <person name="Stearns R.G."/>
            <person name="Tran R."/>
            <person name="Tsai Y."/>
            <person name="Uervirojnangkoorn M."/>
            <person name="Wilmot C.M."/>
            <person name="Yachandra V."/>
            <person name="Yano J."/>
            <person name="Yukl E.T."/>
            <person name="Zhu D."/>
            <person name="Zouni A."/>
        </authorList>
    </citation>
    <scope>X-RAY CRYSTALLOGRAPHY (2.20 ANGSTROMS) IN COMPLEX WITH IRON AND IRON-SULFUR (2FE-2S)</scope>
    <scope>COFACTOR</scope>
</reference>